<dbReference type="EMBL" id="CP000825">
    <property type="protein sequence ID" value="ABV49893.1"/>
    <property type="molecule type" value="Genomic_DNA"/>
</dbReference>
<dbReference type="RefSeq" id="WP_012007053.1">
    <property type="nucleotide sequence ID" value="NC_009840.1"/>
</dbReference>
<dbReference type="SMR" id="A8G2R2"/>
<dbReference type="STRING" id="93060.P9215_02761"/>
<dbReference type="KEGG" id="pmh:P9215_02761"/>
<dbReference type="HOGENOM" id="CLU_205504_1_0_3"/>
<dbReference type="Proteomes" id="UP000002014">
    <property type="component" value="Chromosome"/>
</dbReference>
<dbReference type="GO" id="GO:0031676">
    <property type="term" value="C:plasma membrane-derived thylakoid membrane"/>
    <property type="evidence" value="ECO:0007669"/>
    <property type="project" value="UniProtKB-SubCell"/>
</dbReference>
<dbReference type="GO" id="GO:0015979">
    <property type="term" value="P:photosynthesis"/>
    <property type="evidence" value="ECO:0007669"/>
    <property type="project" value="InterPro"/>
</dbReference>
<dbReference type="HAMAP" id="MF_00293">
    <property type="entry name" value="PSII_PsbN"/>
    <property type="match status" value="1"/>
</dbReference>
<dbReference type="InterPro" id="IPR003398">
    <property type="entry name" value="PSII_PsbN"/>
</dbReference>
<dbReference type="NCBIfam" id="NF009650">
    <property type="entry name" value="PRK13183.1"/>
    <property type="match status" value="1"/>
</dbReference>
<dbReference type="Pfam" id="PF02468">
    <property type="entry name" value="PsbN"/>
    <property type="match status" value="1"/>
</dbReference>
<proteinExistence type="inferred from homology"/>
<keyword id="KW-0472">Membrane</keyword>
<keyword id="KW-0793">Thylakoid</keyword>
<keyword id="KW-0812">Transmembrane</keyword>
<keyword id="KW-1133">Transmembrane helix</keyword>
<organism>
    <name type="scientific">Prochlorococcus marinus (strain MIT 9215)</name>
    <dbReference type="NCBI Taxonomy" id="93060"/>
    <lineage>
        <taxon>Bacteria</taxon>
        <taxon>Bacillati</taxon>
        <taxon>Cyanobacteriota</taxon>
        <taxon>Cyanophyceae</taxon>
        <taxon>Synechococcales</taxon>
        <taxon>Prochlorococcaceae</taxon>
        <taxon>Prochlorococcus</taxon>
    </lineage>
</organism>
<reference key="1">
    <citation type="journal article" date="2007" name="PLoS Genet.">
        <title>Patterns and implications of gene gain and loss in the evolution of Prochlorococcus.</title>
        <authorList>
            <person name="Kettler G.C."/>
            <person name="Martiny A.C."/>
            <person name="Huang K."/>
            <person name="Zucker J."/>
            <person name="Coleman M.L."/>
            <person name="Rodrigue S."/>
            <person name="Chen F."/>
            <person name="Lapidus A."/>
            <person name="Ferriera S."/>
            <person name="Johnson J."/>
            <person name="Steglich C."/>
            <person name="Church G.M."/>
            <person name="Richardson P."/>
            <person name="Chisholm S.W."/>
        </authorList>
    </citation>
    <scope>NUCLEOTIDE SEQUENCE [LARGE SCALE GENOMIC DNA]</scope>
    <source>
        <strain>MIT 9215</strain>
    </source>
</reference>
<feature type="chain" id="PRO_1000059267" description="Protein PsbN">
    <location>
        <begin position="1"/>
        <end position="50"/>
    </location>
</feature>
<feature type="transmembrane region" description="Helical" evidence="1">
    <location>
        <begin position="14"/>
        <end position="34"/>
    </location>
</feature>
<accession>A8G2R2</accession>
<evidence type="ECO:0000255" key="1">
    <source>
        <dbReference type="HAMAP-Rule" id="MF_00293"/>
    </source>
</evidence>
<name>PSBN_PROM2</name>
<sequence>MQTLSSAPDPAASIAVTILAILLALTGFGLWSAFGPKAKKLTDPWDDHDD</sequence>
<comment type="function">
    <text evidence="1">May play a role in photosystem I and II biogenesis.</text>
</comment>
<comment type="subcellular location">
    <subcellularLocation>
        <location evidence="1">Cellular thylakoid membrane</location>
        <topology evidence="1">Single-pass membrane protein</topology>
    </subcellularLocation>
</comment>
<comment type="similarity">
    <text evidence="1">Belongs to the PsbN family.</text>
</comment>
<comment type="caution">
    <text evidence="1">Originally thought to be a component of PSII; based on experiments in Synechocystis, N.tabacum and barley, and its absence from PSII in T.elongatus and T.vulcanus, this is probably not true.</text>
</comment>
<gene>
    <name evidence="1" type="primary">psbN</name>
    <name type="ordered locus">P9215_02761</name>
</gene>
<protein>
    <recommendedName>
        <fullName evidence="1">Protein PsbN</fullName>
    </recommendedName>
</protein>